<comment type="function">
    <text evidence="1">Probable component of the endoplasmic reticulum-associated degradation (ERAD) pathway.</text>
</comment>
<comment type="similarity">
    <text evidence="3">Belongs to the LCL2 family.</text>
</comment>
<dbReference type="EMBL" id="DS480399">
    <property type="protein sequence ID" value="EDO17719.1"/>
    <property type="molecule type" value="Genomic_DNA"/>
</dbReference>
<dbReference type="RefSeq" id="XP_001645577.1">
    <property type="nucleotide sequence ID" value="XM_001645527.1"/>
</dbReference>
<dbReference type="FunCoup" id="A7TJ20">
    <property type="interactions" value="29"/>
</dbReference>
<dbReference type="STRING" id="436907.A7TJ20"/>
<dbReference type="GeneID" id="5545961"/>
<dbReference type="KEGG" id="vpo:Kpol_1033p23"/>
<dbReference type="eggNOG" id="ENOG502S416">
    <property type="taxonomic scope" value="Eukaryota"/>
</dbReference>
<dbReference type="HOGENOM" id="CLU_142363_1_0_1"/>
<dbReference type="InParanoid" id="A7TJ20"/>
<dbReference type="OMA" id="DNYLCPD"/>
<dbReference type="OrthoDB" id="2234316at2759"/>
<dbReference type="PhylomeDB" id="A7TJ20"/>
<dbReference type="Proteomes" id="UP000000267">
    <property type="component" value="Unassembled WGS sequence"/>
</dbReference>
<dbReference type="GO" id="GO:0036503">
    <property type="term" value="P:ERAD pathway"/>
    <property type="evidence" value="ECO:0007669"/>
    <property type="project" value="TreeGrafter"/>
</dbReference>
<dbReference type="CDD" id="cd23996">
    <property type="entry name" value="LCL2-like"/>
    <property type="match status" value="1"/>
</dbReference>
<dbReference type="InterPro" id="IPR034543">
    <property type="entry name" value="LCL2"/>
</dbReference>
<dbReference type="PANTHER" id="PTHR38425">
    <property type="entry name" value="LONG CHRONOLOGICAL LIFESPAN PROTEIN 2"/>
    <property type="match status" value="1"/>
</dbReference>
<dbReference type="PANTHER" id="PTHR38425:SF1">
    <property type="entry name" value="LONG CHRONOLOGICAL LIFESPAN PROTEIN 2"/>
    <property type="match status" value="1"/>
</dbReference>
<keyword id="KW-1185">Reference proteome</keyword>
<keyword id="KW-0732">Signal</keyword>
<feature type="signal peptide" evidence="2">
    <location>
        <begin position="1"/>
        <end position="22"/>
    </location>
</feature>
<feature type="chain" id="PRO_0000408630" description="Long chronological lifespan protein 2">
    <location>
        <begin position="23"/>
        <end position="143"/>
    </location>
</feature>
<accession>A7TJ20</accession>
<name>LCL2_VANPO</name>
<organism>
    <name type="scientific">Vanderwaltozyma polyspora (strain ATCC 22028 / DSM 70294 / BCRC 21397 / CBS 2163 / NBRC 10782 / NRRL Y-8283 / UCD 57-17)</name>
    <name type="common">Kluyveromyces polysporus</name>
    <dbReference type="NCBI Taxonomy" id="436907"/>
    <lineage>
        <taxon>Eukaryota</taxon>
        <taxon>Fungi</taxon>
        <taxon>Dikarya</taxon>
        <taxon>Ascomycota</taxon>
        <taxon>Saccharomycotina</taxon>
        <taxon>Saccharomycetes</taxon>
        <taxon>Saccharomycetales</taxon>
        <taxon>Saccharomycetaceae</taxon>
        <taxon>Vanderwaltozyma</taxon>
    </lineage>
</organism>
<proteinExistence type="inferred from homology"/>
<evidence type="ECO:0000250" key="1"/>
<evidence type="ECO:0000255" key="2"/>
<evidence type="ECO:0000305" key="3"/>
<gene>
    <name type="primary">LCL2</name>
    <name type="ORF">Kpol_1033p23</name>
</gene>
<sequence length="143" mass="15983">MIAGFFTRFLFAILLLLPYSQGFFNFQGNQRQQQQQHHQNANPAEGFLSPHEERALSNQCPGYLCPDTEECVDSPSSCPCPFPGSQLKCSLPDGTFVCISKPATDNEDINRKYDDLSGNSKIKFNGVRDCGWVYEMAVKGFST</sequence>
<protein>
    <recommendedName>
        <fullName>Long chronological lifespan protein 2</fullName>
    </recommendedName>
</protein>
<reference key="1">
    <citation type="journal article" date="2007" name="Proc. Natl. Acad. Sci. U.S.A.">
        <title>Independent sorting-out of thousands of duplicated gene pairs in two yeast species descended from a whole-genome duplication.</title>
        <authorList>
            <person name="Scannell D.R."/>
            <person name="Frank A.C."/>
            <person name="Conant G.C."/>
            <person name="Byrne K.P."/>
            <person name="Woolfit M."/>
            <person name="Wolfe K.H."/>
        </authorList>
    </citation>
    <scope>NUCLEOTIDE SEQUENCE [LARGE SCALE GENOMIC DNA]</scope>
    <source>
        <strain>ATCC 22028 / DSM 70294 / BCRC 21397 / CBS 2163 / NBRC 10782 / NRRL Y-8283 / UCD 57-17</strain>
    </source>
</reference>